<sequence length="135" mass="14782">MSKLNKTILADFEAAQIQRKLPEFNQGDTVVVNVKVKEGNRERVQAYEGVVIGTKNAGLNSSFTVRKISHGFGVERVFQTHSAIIDSVEVKRRGKVRAGKLYYLRGLEGKAARIKEDLAAAAQAKAARQAAAKVE</sequence>
<comment type="function">
    <text evidence="1">This protein is located at the 30S-50S ribosomal subunit interface and may play a role in the structure and function of the aminoacyl-tRNA binding site.</text>
</comment>
<comment type="similarity">
    <text evidence="1">Belongs to the bacterial ribosomal protein bL19 family.</text>
</comment>
<accession>Q3BVY7</accession>
<protein>
    <recommendedName>
        <fullName evidence="1">Large ribosomal subunit protein bL19</fullName>
    </recommendedName>
    <alternativeName>
        <fullName evidence="2">50S ribosomal protein L19</fullName>
    </alternativeName>
</protein>
<dbReference type="EMBL" id="AM039952">
    <property type="protein sequence ID" value="CAJ22976.1"/>
    <property type="molecule type" value="Genomic_DNA"/>
</dbReference>
<dbReference type="RefSeq" id="WP_011346791.1">
    <property type="nucleotide sequence ID" value="NZ_CP017190.1"/>
</dbReference>
<dbReference type="SMR" id="Q3BVY7"/>
<dbReference type="STRING" id="456327.BJD11_15960"/>
<dbReference type="KEGG" id="xcv:XCV1345"/>
<dbReference type="eggNOG" id="COG0335">
    <property type="taxonomic scope" value="Bacteria"/>
</dbReference>
<dbReference type="HOGENOM" id="CLU_103507_2_1_6"/>
<dbReference type="Proteomes" id="UP000007069">
    <property type="component" value="Chromosome"/>
</dbReference>
<dbReference type="GO" id="GO:0022625">
    <property type="term" value="C:cytosolic large ribosomal subunit"/>
    <property type="evidence" value="ECO:0007669"/>
    <property type="project" value="TreeGrafter"/>
</dbReference>
<dbReference type="GO" id="GO:0003735">
    <property type="term" value="F:structural constituent of ribosome"/>
    <property type="evidence" value="ECO:0007669"/>
    <property type="project" value="InterPro"/>
</dbReference>
<dbReference type="GO" id="GO:0006412">
    <property type="term" value="P:translation"/>
    <property type="evidence" value="ECO:0007669"/>
    <property type="project" value="UniProtKB-UniRule"/>
</dbReference>
<dbReference type="FunFam" id="2.30.30.790:FF:000001">
    <property type="entry name" value="50S ribosomal protein L19"/>
    <property type="match status" value="1"/>
</dbReference>
<dbReference type="Gene3D" id="2.30.30.790">
    <property type="match status" value="1"/>
</dbReference>
<dbReference type="HAMAP" id="MF_00402">
    <property type="entry name" value="Ribosomal_bL19"/>
    <property type="match status" value="1"/>
</dbReference>
<dbReference type="InterPro" id="IPR001857">
    <property type="entry name" value="Ribosomal_bL19"/>
</dbReference>
<dbReference type="InterPro" id="IPR018257">
    <property type="entry name" value="Ribosomal_bL19_CS"/>
</dbReference>
<dbReference type="InterPro" id="IPR038657">
    <property type="entry name" value="Ribosomal_bL19_sf"/>
</dbReference>
<dbReference type="InterPro" id="IPR008991">
    <property type="entry name" value="Translation_prot_SH3-like_sf"/>
</dbReference>
<dbReference type="NCBIfam" id="TIGR01024">
    <property type="entry name" value="rplS_bact"/>
    <property type="match status" value="1"/>
</dbReference>
<dbReference type="PANTHER" id="PTHR15680:SF9">
    <property type="entry name" value="LARGE RIBOSOMAL SUBUNIT PROTEIN BL19M"/>
    <property type="match status" value="1"/>
</dbReference>
<dbReference type="PANTHER" id="PTHR15680">
    <property type="entry name" value="RIBOSOMAL PROTEIN L19"/>
    <property type="match status" value="1"/>
</dbReference>
<dbReference type="Pfam" id="PF01245">
    <property type="entry name" value="Ribosomal_L19"/>
    <property type="match status" value="1"/>
</dbReference>
<dbReference type="PIRSF" id="PIRSF002191">
    <property type="entry name" value="Ribosomal_L19"/>
    <property type="match status" value="1"/>
</dbReference>
<dbReference type="PRINTS" id="PR00061">
    <property type="entry name" value="RIBOSOMALL19"/>
</dbReference>
<dbReference type="SUPFAM" id="SSF50104">
    <property type="entry name" value="Translation proteins SH3-like domain"/>
    <property type="match status" value="1"/>
</dbReference>
<dbReference type="PROSITE" id="PS01015">
    <property type="entry name" value="RIBOSOMAL_L19"/>
    <property type="match status" value="1"/>
</dbReference>
<reference key="1">
    <citation type="journal article" date="2005" name="J. Bacteriol.">
        <title>Insights into genome plasticity and pathogenicity of the plant pathogenic Bacterium Xanthomonas campestris pv. vesicatoria revealed by the complete genome sequence.</title>
        <authorList>
            <person name="Thieme F."/>
            <person name="Koebnik R."/>
            <person name="Bekel T."/>
            <person name="Berger C."/>
            <person name="Boch J."/>
            <person name="Buettner D."/>
            <person name="Caldana C."/>
            <person name="Gaigalat L."/>
            <person name="Goesmann A."/>
            <person name="Kay S."/>
            <person name="Kirchner O."/>
            <person name="Lanz C."/>
            <person name="Linke B."/>
            <person name="McHardy A.C."/>
            <person name="Meyer F."/>
            <person name="Mittenhuber G."/>
            <person name="Nies D.H."/>
            <person name="Niesbach-Kloesgen U."/>
            <person name="Patschkowski T."/>
            <person name="Rueckert C."/>
            <person name="Rupp O."/>
            <person name="Schneiker S."/>
            <person name="Schuster S.C."/>
            <person name="Vorhoelter F.J."/>
            <person name="Weber E."/>
            <person name="Puehler A."/>
            <person name="Bonas U."/>
            <person name="Bartels D."/>
            <person name="Kaiser O."/>
        </authorList>
    </citation>
    <scope>NUCLEOTIDE SEQUENCE [LARGE SCALE GENOMIC DNA]</scope>
    <source>
        <strain>85-10</strain>
    </source>
</reference>
<name>RL19_XANE5</name>
<feature type="chain" id="PRO_0000226884" description="Large ribosomal subunit protein bL19">
    <location>
        <begin position="1"/>
        <end position="135"/>
    </location>
</feature>
<gene>
    <name evidence="1" type="primary">rplS</name>
    <name type="ordered locus">XCV1345</name>
</gene>
<organism>
    <name type="scientific">Xanthomonas euvesicatoria pv. vesicatoria (strain 85-10)</name>
    <name type="common">Xanthomonas campestris pv. vesicatoria</name>
    <dbReference type="NCBI Taxonomy" id="316273"/>
    <lineage>
        <taxon>Bacteria</taxon>
        <taxon>Pseudomonadati</taxon>
        <taxon>Pseudomonadota</taxon>
        <taxon>Gammaproteobacteria</taxon>
        <taxon>Lysobacterales</taxon>
        <taxon>Lysobacteraceae</taxon>
        <taxon>Xanthomonas</taxon>
    </lineage>
</organism>
<keyword id="KW-0687">Ribonucleoprotein</keyword>
<keyword id="KW-0689">Ribosomal protein</keyword>
<evidence type="ECO:0000255" key="1">
    <source>
        <dbReference type="HAMAP-Rule" id="MF_00402"/>
    </source>
</evidence>
<evidence type="ECO:0000305" key="2"/>
<proteinExistence type="inferred from homology"/>